<proteinExistence type="inferred from homology"/>
<name>DXS_MARMM</name>
<comment type="function">
    <text evidence="1">Catalyzes the acyloin condensation reaction between C atoms 2 and 3 of pyruvate and glyceraldehyde 3-phosphate to yield 1-deoxy-D-xylulose-5-phosphate (DXP).</text>
</comment>
<comment type="catalytic activity">
    <reaction evidence="1">
        <text>D-glyceraldehyde 3-phosphate + pyruvate + H(+) = 1-deoxy-D-xylulose 5-phosphate + CO2</text>
        <dbReference type="Rhea" id="RHEA:12605"/>
        <dbReference type="ChEBI" id="CHEBI:15361"/>
        <dbReference type="ChEBI" id="CHEBI:15378"/>
        <dbReference type="ChEBI" id="CHEBI:16526"/>
        <dbReference type="ChEBI" id="CHEBI:57792"/>
        <dbReference type="ChEBI" id="CHEBI:59776"/>
        <dbReference type="EC" id="2.2.1.7"/>
    </reaction>
</comment>
<comment type="cofactor">
    <cofactor evidence="1">
        <name>Mg(2+)</name>
        <dbReference type="ChEBI" id="CHEBI:18420"/>
    </cofactor>
    <text evidence="1">Binds 1 Mg(2+) ion per subunit.</text>
</comment>
<comment type="cofactor">
    <cofactor evidence="1">
        <name>thiamine diphosphate</name>
        <dbReference type="ChEBI" id="CHEBI:58937"/>
    </cofactor>
    <text evidence="1">Binds 1 thiamine pyrophosphate per subunit.</text>
</comment>
<comment type="pathway">
    <text evidence="1">Metabolic intermediate biosynthesis; 1-deoxy-D-xylulose 5-phosphate biosynthesis; 1-deoxy-D-xylulose 5-phosphate from D-glyceraldehyde 3-phosphate and pyruvate: step 1/1.</text>
</comment>
<comment type="subunit">
    <text evidence="1">Homodimer.</text>
</comment>
<comment type="similarity">
    <text evidence="1">Belongs to the transketolase family. DXPS subfamily.</text>
</comment>
<feature type="chain" id="PRO_1000019038" description="1-deoxy-D-xylulose-5-phosphate synthase">
    <location>
        <begin position="1"/>
        <end position="643"/>
    </location>
</feature>
<feature type="binding site" evidence="1">
    <location>
        <position position="79"/>
    </location>
    <ligand>
        <name>thiamine diphosphate</name>
        <dbReference type="ChEBI" id="CHEBI:58937"/>
    </ligand>
</feature>
<feature type="binding site" evidence="1">
    <location>
        <begin position="120"/>
        <end position="122"/>
    </location>
    <ligand>
        <name>thiamine diphosphate</name>
        <dbReference type="ChEBI" id="CHEBI:58937"/>
    </ligand>
</feature>
<feature type="binding site" evidence="1">
    <location>
        <position position="151"/>
    </location>
    <ligand>
        <name>Mg(2+)</name>
        <dbReference type="ChEBI" id="CHEBI:18420"/>
    </ligand>
</feature>
<feature type="binding site" evidence="1">
    <location>
        <begin position="152"/>
        <end position="153"/>
    </location>
    <ligand>
        <name>thiamine diphosphate</name>
        <dbReference type="ChEBI" id="CHEBI:58937"/>
    </ligand>
</feature>
<feature type="binding site" evidence="1">
    <location>
        <position position="180"/>
    </location>
    <ligand>
        <name>Mg(2+)</name>
        <dbReference type="ChEBI" id="CHEBI:18420"/>
    </ligand>
</feature>
<feature type="binding site" evidence="1">
    <location>
        <position position="180"/>
    </location>
    <ligand>
        <name>thiamine diphosphate</name>
        <dbReference type="ChEBI" id="CHEBI:58937"/>
    </ligand>
</feature>
<feature type="binding site" evidence="1">
    <location>
        <position position="287"/>
    </location>
    <ligand>
        <name>thiamine diphosphate</name>
        <dbReference type="ChEBI" id="CHEBI:58937"/>
    </ligand>
</feature>
<feature type="binding site" evidence="1">
    <location>
        <position position="369"/>
    </location>
    <ligand>
        <name>thiamine diphosphate</name>
        <dbReference type="ChEBI" id="CHEBI:58937"/>
    </ligand>
</feature>
<dbReference type="EC" id="2.2.1.7" evidence="1"/>
<dbReference type="EMBL" id="CP000449">
    <property type="protein sequence ID" value="ABI65142.1"/>
    <property type="molecule type" value="Genomic_DNA"/>
</dbReference>
<dbReference type="RefSeq" id="WP_011642789.1">
    <property type="nucleotide sequence ID" value="NC_008347.1"/>
</dbReference>
<dbReference type="SMR" id="Q0ARE5"/>
<dbReference type="STRING" id="394221.Mmar10_0849"/>
<dbReference type="KEGG" id="mmr:Mmar10_0849"/>
<dbReference type="eggNOG" id="COG1154">
    <property type="taxonomic scope" value="Bacteria"/>
</dbReference>
<dbReference type="HOGENOM" id="CLU_009227_1_4_5"/>
<dbReference type="UniPathway" id="UPA00064">
    <property type="reaction ID" value="UER00091"/>
</dbReference>
<dbReference type="Proteomes" id="UP000001964">
    <property type="component" value="Chromosome"/>
</dbReference>
<dbReference type="GO" id="GO:0008661">
    <property type="term" value="F:1-deoxy-D-xylulose-5-phosphate synthase activity"/>
    <property type="evidence" value="ECO:0007669"/>
    <property type="project" value="UniProtKB-UniRule"/>
</dbReference>
<dbReference type="GO" id="GO:0000287">
    <property type="term" value="F:magnesium ion binding"/>
    <property type="evidence" value="ECO:0007669"/>
    <property type="project" value="UniProtKB-UniRule"/>
</dbReference>
<dbReference type="GO" id="GO:0030976">
    <property type="term" value="F:thiamine pyrophosphate binding"/>
    <property type="evidence" value="ECO:0007669"/>
    <property type="project" value="UniProtKB-UniRule"/>
</dbReference>
<dbReference type="GO" id="GO:0052865">
    <property type="term" value="P:1-deoxy-D-xylulose 5-phosphate biosynthetic process"/>
    <property type="evidence" value="ECO:0007669"/>
    <property type="project" value="UniProtKB-UniPathway"/>
</dbReference>
<dbReference type="GO" id="GO:0019682">
    <property type="term" value="P:glyceraldehyde-3-phosphate metabolic process"/>
    <property type="evidence" value="ECO:0007669"/>
    <property type="project" value="UniProtKB-ARBA"/>
</dbReference>
<dbReference type="GO" id="GO:0016114">
    <property type="term" value="P:terpenoid biosynthetic process"/>
    <property type="evidence" value="ECO:0007669"/>
    <property type="project" value="UniProtKB-UniRule"/>
</dbReference>
<dbReference type="GO" id="GO:0009228">
    <property type="term" value="P:thiamine biosynthetic process"/>
    <property type="evidence" value="ECO:0007669"/>
    <property type="project" value="UniProtKB-UniRule"/>
</dbReference>
<dbReference type="CDD" id="cd02007">
    <property type="entry name" value="TPP_DXS"/>
    <property type="match status" value="1"/>
</dbReference>
<dbReference type="CDD" id="cd07033">
    <property type="entry name" value="TPP_PYR_DXS_TK_like"/>
    <property type="match status" value="1"/>
</dbReference>
<dbReference type="FunFam" id="3.40.50.920:FF:000002">
    <property type="entry name" value="1-deoxy-D-xylulose-5-phosphate synthase"/>
    <property type="match status" value="1"/>
</dbReference>
<dbReference type="FunFam" id="3.40.50.970:FF:000005">
    <property type="entry name" value="1-deoxy-D-xylulose-5-phosphate synthase"/>
    <property type="match status" value="1"/>
</dbReference>
<dbReference type="Gene3D" id="3.40.50.920">
    <property type="match status" value="1"/>
</dbReference>
<dbReference type="Gene3D" id="3.40.50.970">
    <property type="match status" value="2"/>
</dbReference>
<dbReference type="HAMAP" id="MF_00315">
    <property type="entry name" value="DXP_synth"/>
    <property type="match status" value="1"/>
</dbReference>
<dbReference type="InterPro" id="IPR005477">
    <property type="entry name" value="Dxylulose-5-P_synthase"/>
</dbReference>
<dbReference type="InterPro" id="IPR029061">
    <property type="entry name" value="THDP-binding"/>
</dbReference>
<dbReference type="InterPro" id="IPR009014">
    <property type="entry name" value="Transketo_C/PFOR_II"/>
</dbReference>
<dbReference type="InterPro" id="IPR005475">
    <property type="entry name" value="Transketolase-like_Pyr-bd"/>
</dbReference>
<dbReference type="InterPro" id="IPR020826">
    <property type="entry name" value="Transketolase_BS"/>
</dbReference>
<dbReference type="InterPro" id="IPR033248">
    <property type="entry name" value="Transketolase_C"/>
</dbReference>
<dbReference type="InterPro" id="IPR049557">
    <property type="entry name" value="Transketolase_CS"/>
</dbReference>
<dbReference type="NCBIfam" id="TIGR00204">
    <property type="entry name" value="dxs"/>
    <property type="match status" value="1"/>
</dbReference>
<dbReference type="NCBIfam" id="NF003933">
    <property type="entry name" value="PRK05444.2-2"/>
    <property type="match status" value="1"/>
</dbReference>
<dbReference type="PANTHER" id="PTHR43322">
    <property type="entry name" value="1-D-DEOXYXYLULOSE 5-PHOSPHATE SYNTHASE-RELATED"/>
    <property type="match status" value="1"/>
</dbReference>
<dbReference type="PANTHER" id="PTHR43322:SF5">
    <property type="entry name" value="1-DEOXY-D-XYLULOSE-5-PHOSPHATE SYNTHASE, CHLOROPLASTIC"/>
    <property type="match status" value="1"/>
</dbReference>
<dbReference type="Pfam" id="PF13292">
    <property type="entry name" value="DXP_synthase_N"/>
    <property type="match status" value="1"/>
</dbReference>
<dbReference type="Pfam" id="PF02779">
    <property type="entry name" value="Transket_pyr"/>
    <property type="match status" value="1"/>
</dbReference>
<dbReference type="Pfam" id="PF02780">
    <property type="entry name" value="Transketolase_C"/>
    <property type="match status" value="1"/>
</dbReference>
<dbReference type="SMART" id="SM00861">
    <property type="entry name" value="Transket_pyr"/>
    <property type="match status" value="1"/>
</dbReference>
<dbReference type="SUPFAM" id="SSF52518">
    <property type="entry name" value="Thiamin diphosphate-binding fold (THDP-binding)"/>
    <property type="match status" value="2"/>
</dbReference>
<dbReference type="SUPFAM" id="SSF52922">
    <property type="entry name" value="TK C-terminal domain-like"/>
    <property type="match status" value="1"/>
</dbReference>
<dbReference type="PROSITE" id="PS00801">
    <property type="entry name" value="TRANSKETOLASE_1"/>
    <property type="match status" value="1"/>
</dbReference>
<dbReference type="PROSITE" id="PS00802">
    <property type="entry name" value="TRANSKETOLASE_2"/>
    <property type="match status" value="1"/>
</dbReference>
<protein>
    <recommendedName>
        <fullName evidence="1">1-deoxy-D-xylulose-5-phosphate synthase</fullName>
        <ecNumber evidence="1">2.2.1.7</ecNumber>
    </recommendedName>
    <alternativeName>
        <fullName evidence="1">1-deoxyxylulose-5-phosphate synthase</fullName>
        <shortName evidence="1">DXP synthase</shortName>
        <shortName evidence="1">DXPS</shortName>
    </alternativeName>
</protein>
<reference key="1">
    <citation type="submission" date="2006-08" db="EMBL/GenBank/DDBJ databases">
        <title>Complete sequence of Maricaulis maris MCS10.</title>
        <authorList>
            <consortium name="US DOE Joint Genome Institute"/>
            <person name="Copeland A."/>
            <person name="Lucas S."/>
            <person name="Lapidus A."/>
            <person name="Barry K."/>
            <person name="Detter J.C."/>
            <person name="Glavina del Rio T."/>
            <person name="Hammon N."/>
            <person name="Israni S."/>
            <person name="Dalin E."/>
            <person name="Tice H."/>
            <person name="Pitluck S."/>
            <person name="Saunders E."/>
            <person name="Brettin T."/>
            <person name="Bruce D."/>
            <person name="Han C."/>
            <person name="Tapia R."/>
            <person name="Gilna P."/>
            <person name="Schmutz J."/>
            <person name="Larimer F."/>
            <person name="Land M."/>
            <person name="Hauser L."/>
            <person name="Kyrpides N."/>
            <person name="Mikhailova N."/>
            <person name="Viollier P."/>
            <person name="Stephens C."/>
            <person name="Richardson P."/>
        </authorList>
    </citation>
    <scope>NUCLEOTIDE SEQUENCE [LARGE SCALE GENOMIC DNA]</scope>
    <source>
        <strain>MCS10</strain>
    </source>
</reference>
<organism>
    <name type="scientific">Maricaulis maris (strain MCS10)</name>
    <name type="common">Caulobacter maris</name>
    <dbReference type="NCBI Taxonomy" id="394221"/>
    <lineage>
        <taxon>Bacteria</taxon>
        <taxon>Pseudomonadati</taxon>
        <taxon>Pseudomonadota</taxon>
        <taxon>Alphaproteobacteria</taxon>
        <taxon>Maricaulales</taxon>
        <taxon>Maricaulaceae</taxon>
        <taxon>Maricaulis</taxon>
    </lineage>
</organism>
<accession>Q0ARE5</accession>
<sequence length="643" mass="68681">MSMTPKTPILDTVNSPADLKNLPLDRLKSLADEVRAETIDAVSVTGGHLGAGLGVVELTTALHHVFDTPTDTLIWDVGHQCYPHKILTGRRDRIRTLRQPGGLSGFTKRSESEYDPFGAAHASTSISAALGFAVGRDLKDENRNVIAVIGDGSMSAGMAYEAMNNAGHIGGRLIVILNDNDMSIAPPVGAMSHYFARLVSSQRYRSIRKLGKGVAKALRVEEAARRAEEYMRGMAMGGTLFEEMGFRYVGPIDGHDLDQLVPVLRNVRDGDNGPVLIHVVTQKGKGYAPAEASDDKYHGVAKFNVITGEQQKSKAAAPSYTKVFAQQLIREAEADSRVVGVTAAMPGGTGLDLFGERFPDRMFDVGIAEQHAVTFAAGLAADGMKPFAAIYSTFLQRGYDQVVHDVAIQKLPVRFAIDRAGLVGADGATHAGSFDIGYLGALPGMVLMAAADELELSRMVKTAALIDDGPSAFRYPRGNGTGIEIPDQIEPLEIGKGRIVREGSRIAILSLGTRLEESLKAADALAAQGFSTTVADARFAKPLDEDLILRLAREHEVLITVEEGAVGGFGAFVLHMLADKGALDRGLRIRTLTLPDVFQDQEAPFDMYETAGLNARHIAAKALEAMGKDDAAAERVAAALIAG</sequence>
<evidence type="ECO:0000255" key="1">
    <source>
        <dbReference type="HAMAP-Rule" id="MF_00315"/>
    </source>
</evidence>
<gene>
    <name evidence="1" type="primary">dxs</name>
    <name type="ordered locus">Mmar10_0849</name>
</gene>
<keyword id="KW-0414">Isoprene biosynthesis</keyword>
<keyword id="KW-0460">Magnesium</keyword>
<keyword id="KW-0479">Metal-binding</keyword>
<keyword id="KW-1185">Reference proteome</keyword>
<keyword id="KW-0784">Thiamine biosynthesis</keyword>
<keyword id="KW-0786">Thiamine pyrophosphate</keyword>
<keyword id="KW-0808">Transferase</keyword>